<comment type="function">
    <text evidence="2">Catalyzes the reversible phosphorolytic breakdown of the N-glycosidic bond in the beta-(deoxy)ribonucleoside molecules, with the formation of the corresponding free purine bases and pentose-1-phosphate.</text>
</comment>
<comment type="catalytic activity">
    <reaction evidence="2">
        <text>a purine D-ribonucleoside + phosphate = a purine nucleobase + alpha-D-ribose 1-phosphate</text>
        <dbReference type="Rhea" id="RHEA:19805"/>
        <dbReference type="ChEBI" id="CHEBI:26386"/>
        <dbReference type="ChEBI" id="CHEBI:43474"/>
        <dbReference type="ChEBI" id="CHEBI:57720"/>
        <dbReference type="ChEBI" id="CHEBI:142355"/>
        <dbReference type="EC" id="2.4.2.1"/>
    </reaction>
</comment>
<comment type="catalytic activity">
    <reaction evidence="2">
        <text>a purine 2'-deoxy-D-ribonucleoside + phosphate = a purine nucleobase + 2-deoxy-alpha-D-ribose 1-phosphate</text>
        <dbReference type="Rhea" id="RHEA:36431"/>
        <dbReference type="ChEBI" id="CHEBI:26386"/>
        <dbReference type="ChEBI" id="CHEBI:43474"/>
        <dbReference type="ChEBI" id="CHEBI:57259"/>
        <dbReference type="ChEBI" id="CHEBI:142361"/>
        <dbReference type="EC" id="2.4.2.1"/>
    </reaction>
</comment>
<comment type="subunit">
    <text evidence="2">Homohexamer; trimer of homodimers.</text>
</comment>
<comment type="similarity">
    <text evidence="2">Belongs to the PNP/UDP phosphorylase family.</text>
</comment>
<accession>Q9ZK38</accession>
<name>DEOD_HELPJ</name>
<proteinExistence type="inferred from homology"/>
<sequence length="233" mass="25688">MTPHINAKIGDFYPQCLLCGDPLRVSYIAKNFLQDAKEITNVRNMLGFSGKYKGKGISLMGHGMGIASCTIYVTELIKTYQVKELLRIGTCGAISPKVGLKDIVMATGASTDSKTNRVRFLNHDLSATPDFELSLRAYQTAKRLGIDLKIGNVFSSDFFYSFETHAFGLMAQYNHLAIEMEAAGLYATAMELNAKALCLCSVSDHLITKEALSPKERIESFDNMITLALEMMS</sequence>
<dbReference type="EC" id="2.4.2.1" evidence="2"/>
<dbReference type="EMBL" id="AE001439">
    <property type="protein sequence ID" value="AAD06684.1"/>
    <property type="molecule type" value="Genomic_DNA"/>
</dbReference>
<dbReference type="PIR" id="C71848">
    <property type="entry name" value="C71848"/>
</dbReference>
<dbReference type="RefSeq" id="WP_000187740.1">
    <property type="nucleotide sequence ID" value="NC_000921.1"/>
</dbReference>
<dbReference type="SMR" id="Q9ZK38"/>
<dbReference type="IntAct" id="Q9ZK38">
    <property type="interactions" value="1"/>
</dbReference>
<dbReference type="KEGG" id="hpj:jhp_1104"/>
<dbReference type="PATRIC" id="fig|85963.30.peg.1475"/>
<dbReference type="eggNOG" id="COG0813">
    <property type="taxonomic scope" value="Bacteria"/>
</dbReference>
<dbReference type="Proteomes" id="UP000000804">
    <property type="component" value="Chromosome"/>
</dbReference>
<dbReference type="GO" id="GO:0005829">
    <property type="term" value="C:cytosol"/>
    <property type="evidence" value="ECO:0007669"/>
    <property type="project" value="TreeGrafter"/>
</dbReference>
<dbReference type="GO" id="GO:0004731">
    <property type="term" value="F:purine-nucleoside phosphorylase activity"/>
    <property type="evidence" value="ECO:0007669"/>
    <property type="project" value="UniProtKB-EC"/>
</dbReference>
<dbReference type="GO" id="GO:0006152">
    <property type="term" value="P:purine nucleoside catabolic process"/>
    <property type="evidence" value="ECO:0007669"/>
    <property type="project" value="TreeGrafter"/>
</dbReference>
<dbReference type="CDD" id="cd09006">
    <property type="entry name" value="PNP_EcPNPI-like"/>
    <property type="match status" value="1"/>
</dbReference>
<dbReference type="Gene3D" id="3.40.50.1580">
    <property type="entry name" value="Nucleoside phosphorylase domain"/>
    <property type="match status" value="1"/>
</dbReference>
<dbReference type="HAMAP" id="MF_01627">
    <property type="entry name" value="Pur_nucleosid_phosp"/>
    <property type="match status" value="1"/>
</dbReference>
<dbReference type="InterPro" id="IPR004402">
    <property type="entry name" value="DeoD-type"/>
</dbReference>
<dbReference type="InterPro" id="IPR018016">
    <property type="entry name" value="Nucleoside_phosphorylase_CS"/>
</dbReference>
<dbReference type="InterPro" id="IPR000845">
    <property type="entry name" value="Nucleoside_phosphorylase_d"/>
</dbReference>
<dbReference type="InterPro" id="IPR035994">
    <property type="entry name" value="Nucleoside_phosphorylase_sf"/>
</dbReference>
<dbReference type="NCBIfam" id="TIGR00107">
    <property type="entry name" value="deoD"/>
    <property type="match status" value="1"/>
</dbReference>
<dbReference type="NCBIfam" id="NF004489">
    <property type="entry name" value="PRK05819.1"/>
    <property type="match status" value="1"/>
</dbReference>
<dbReference type="PANTHER" id="PTHR43691:SF11">
    <property type="entry name" value="FI09636P-RELATED"/>
    <property type="match status" value="1"/>
</dbReference>
<dbReference type="PANTHER" id="PTHR43691">
    <property type="entry name" value="URIDINE PHOSPHORYLASE"/>
    <property type="match status" value="1"/>
</dbReference>
<dbReference type="Pfam" id="PF01048">
    <property type="entry name" value="PNP_UDP_1"/>
    <property type="match status" value="1"/>
</dbReference>
<dbReference type="SUPFAM" id="SSF53167">
    <property type="entry name" value="Purine and uridine phosphorylases"/>
    <property type="match status" value="1"/>
</dbReference>
<dbReference type="PROSITE" id="PS01232">
    <property type="entry name" value="PNP_UDP_1"/>
    <property type="match status" value="1"/>
</dbReference>
<feature type="chain" id="PRO_0000063138" description="Purine nucleoside phosphorylase DeoD-type">
    <location>
        <begin position="1"/>
        <end position="233"/>
    </location>
</feature>
<feature type="active site" description="Proton donor" evidence="2">
    <location>
        <position position="204"/>
    </location>
</feature>
<feature type="binding site" evidence="1">
    <location>
        <position position="4"/>
    </location>
    <ligand>
        <name>a purine D-ribonucleoside</name>
        <dbReference type="ChEBI" id="CHEBI:142355"/>
        <note>ligand shared between dimeric partners</note>
    </ligand>
</feature>
<feature type="binding site" description="in other chain" evidence="1">
    <location>
        <position position="20"/>
    </location>
    <ligand>
        <name>phosphate</name>
        <dbReference type="ChEBI" id="CHEBI:43474"/>
        <note>ligand shared between dimeric partners</note>
    </ligand>
</feature>
<feature type="binding site" description="in other chain" evidence="1">
    <location>
        <position position="24"/>
    </location>
    <ligand>
        <name>phosphate</name>
        <dbReference type="ChEBI" id="CHEBI:43474"/>
        <note>ligand shared between dimeric partners</note>
    </ligand>
</feature>
<feature type="binding site" evidence="1">
    <location>
        <position position="43"/>
    </location>
    <ligand>
        <name>phosphate</name>
        <dbReference type="ChEBI" id="CHEBI:43474"/>
        <note>ligand shared between dimeric partners</note>
    </ligand>
</feature>
<feature type="binding site" description="in other chain" evidence="1">
    <location>
        <begin position="87"/>
        <end position="90"/>
    </location>
    <ligand>
        <name>phosphate</name>
        <dbReference type="ChEBI" id="CHEBI:43474"/>
        <note>ligand shared between dimeric partners</note>
    </ligand>
</feature>
<feature type="binding site" description="in other chain" evidence="1">
    <location>
        <begin position="179"/>
        <end position="181"/>
    </location>
    <ligand>
        <name>a purine D-ribonucleoside</name>
        <dbReference type="ChEBI" id="CHEBI:142355"/>
        <note>ligand shared between dimeric partners</note>
    </ligand>
</feature>
<feature type="binding site" description="in other chain" evidence="1">
    <location>
        <begin position="203"/>
        <end position="204"/>
    </location>
    <ligand>
        <name>a purine D-ribonucleoside</name>
        <dbReference type="ChEBI" id="CHEBI:142355"/>
        <note>ligand shared between dimeric partners</note>
    </ligand>
</feature>
<feature type="site" description="Important for catalytic activity" evidence="2">
    <location>
        <position position="217"/>
    </location>
</feature>
<reference key="1">
    <citation type="journal article" date="1999" name="Nature">
        <title>Genomic sequence comparison of two unrelated isolates of the human gastric pathogen Helicobacter pylori.</title>
        <authorList>
            <person name="Alm R.A."/>
            <person name="Ling L.-S.L."/>
            <person name="Moir D.T."/>
            <person name="King B.L."/>
            <person name="Brown E.D."/>
            <person name="Doig P.C."/>
            <person name="Smith D.R."/>
            <person name="Noonan B."/>
            <person name="Guild B.C."/>
            <person name="deJonge B.L."/>
            <person name="Carmel G."/>
            <person name="Tummino P.J."/>
            <person name="Caruso A."/>
            <person name="Uria-Nickelsen M."/>
            <person name="Mills D.M."/>
            <person name="Ives C."/>
            <person name="Gibson R."/>
            <person name="Merberg D."/>
            <person name="Mills S.D."/>
            <person name="Jiang Q."/>
            <person name="Taylor D.E."/>
            <person name="Vovis G.F."/>
            <person name="Trust T.J."/>
        </authorList>
    </citation>
    <scope>NUCLEOTIDE SEQUENCE [LARGE SCALE GENOMIC DNA]</scope>
    <source>
        <strain>J99 / ATCC 700824</strain>
    </source>
</reference>
<keyword id="KW-0328">Glycosyltransferase</keyword>
<keyword id="KW-0808">Transferase</keyword>
<organism>
    <name type="scientific">Helicobacter pylori (strain J99 / ATCC 700824)</name>
    <name type="common">Campylobacter pylori J99</name>
    <dbReference type="NCBI Taxonomy" id="85963"/>
    <lineage>
        <taxon>Bacteria</taxon>
        <taxon>Pseudomonadati</taxon>
        <taxon>Campylobacterota</taxon>
        <taxon>Epsilonproteobacteria</taxon>
        <taxon>Campylobacterales</taxon>
        <taxon>Helicobacteraceae</taxon>
        <taxon>Helicobacter</taxon>
    </lineage>
</organism>
<evidence type="ECO:0000250" key="1">
    <source>
        <dbReference type="UniProtKB" id="P50389"/>
    </source>
</evidence>
<evidence type="ECO:0000255" key="2">
    <source>
        <dbReference type="HAMAP-Rule" id="MF_01627"/>
    </source>
</evidence>
<gene>
    <name evidence="2" type="primary">deoD</name>
    <name type="ordered locus">jhp_1104</name>
</gene>
<protein>
    <recommendedName>
        <fullName evidence="2">Purine nucleoside phosphorylase DeoD-type</fullName>
        <shortName evidence="2">PNP</shortName>
        <ecNumber evidence="2">2.4.2.1</ecNumber>
    </recommendedName>
</protein>